<proteinExistence type="evidence at transcript level"/>
<name>SGS8_DROME</name>
<organism>
    <name type="scientific">Drosophila melanogaster</name>
    <name type="common">Fruit fly</name>
    <dbReference type="NCBI Taxonomy" id="7227"/>
    <lineage>
        <taxon>Eukaryota</taxon>
        <taxon>Metazoa</taxon>
        <taxon>Ecdysozoa</taxon>
        <taxon>Arthropoda</taxon>
        <taxon>Hexapoda</taxon>
        <taxon>Insecta</taxon>
        <taxon>Pterygota</taxon>
        <taxon>Neoptera</taxon>
        <taxon>Endopterygota</taxon>
        <taxon>Diptera</taxon>
        <taxon>Brachycera</taxon>
        <taxon>Muscomorpha</taxon>
        <taxon>Ephydroidea</taxon>
        <taxon>Drosophilidae</taxon>
        <taxon>Drosophila</taxon>
        <taxon>Sophophora</taxon>
    </lineage>
</organism>
<gene>
    <name type="primary">Sgs8</name>
    <name type="ORF">CG6132</name>
</gene>
<protein>
    <recommendedName>
        <fullName>Salivary glue protein Sgs-8</fullName>
    </recommendedName>
</protein>
<keyword id="KW-1185">Reference proteome</keyword>
<keyword id="KW-0732">Signal</keyword>
<reference key="1">
    <citation type="journal article" date="1983" name="J. Mol. Biol.">
        <title>DNA sequences, gene regulation and modular protein evolution in the Drosophila 68C glue gene cluster.</title>
        <authorList>
            <person name="Garfinkel M.D."/>
            <person name="Pruitt R.E."/>
            <person name="Meyerowitz E.M."/>
        </authorList>
    </citation>
    <scope>NUCLEOTIDE SEQUENCE [GENOMIC DNA]</scope>
</reference>
<reference key="2">
    <citation type="journal article" date="2000" name="Science">
        <title>The genome sequence of Drosophila melanogaster.</title>
        <authorList>
            <person name="Adams M.D."/>
            <person name="Celniker S.E."/>
            <person name="Holt R.A."/>
            <person name="Evans C.A."/>
            <person name="Gocayne J.D."/>
            <person name="Amanatides P.G."/>
            <person name="Scherer S.E."/>
            <person name="Li P.W."/>
            <person name="Hoskins R.A."/>
            <person name="Galle R.F."/>
            <person name="George R.A."/>
            <person name="Lewis S.E."/>
            <person name="Richards S."/>
            <person name="Ashburner M."/>
            <person name="Henderson S.N."/>
            <person name="Sutton G.G."/>
            <person name="Wortman J.R."/>
            <person name="Yandell M.D."/>
            <person name="Zhang Q."/>
            <person name="Chen L.X."/>
            <person name="Brandon R.C."/>
            <person name="Rogers Y.-H.C."/>
            <person name="Blazej R.G."/>
            <person name="Champe M."/>
            <person name="Pfeiffer B.D."/>
            <person name="Wan K.H."/>
            <person name="Doyle C."/>
            <person name="Baxter E.G."/>
            <person name="Helt G."/>
            <person name="Nelson C.R."/>
            <person name="Miklos G.L.G."/>
            <person name="Abril J.F."/>
            <person name="Agbayani A."/>
            <person name="An H.-J."/>
            <person name="Andrews-Pfannkoch C."/>
            <person name="Baldwin D."/>
            <person name="Ballew R.M."/>
            <person name="Basu A."/>
            <person name="Baxendale J."/>
            <person name="Bayraktaroglu L."/>
            <person name="Beasley E.M."/>
            <person name="Beeson K.Y."/>
            <person name="Benos P.V."/>
            <person name="Berman B.P."/>
            <person name="Bhandari D."/>
            <person name="Bolshakov S."/>
            <person name="Borkova D."/>
            <person name="Botchan M.R."/>
            <person name="Bouck J."/>
            <person name="Brokstein P."/>
            <person name="Brottier P."/>
            <person name="Burtis K.C."/>
            <person name="Busam D.A."/>
            <person name="Butler H."/>
            <person name="Cadieu E."/>
            <person name="Center A."/>
            <person name="Chandra I."/>
            <person name="Cherry J.M."/>
            <person name="Cawley S."/>
            <person name="Dahlke C."/>
            <person name="Davenport L.B."/>
            <person name="Davies P."/>
            <person name="de Pablos B."/>
            <person name="Delcher A."/>
            <person name="Deng Z."/>
            <person name="Mays A.D."/>
            <person name="Dew I."/>
            <person name="Dietz S.M."/>
            <person name="Dodson K."/>
            <person name="Doup L.E."/>
            <person name="Downes M."/>
            <person name="Dugan-Rocha S."/>
            <person name="Dunkov B.C."/>
            <person name="Dunn P."/>
            <person name="Durbin K.J."/>
            <person name="Evangelista C.C."/>
            <person name="Ferraz C."/>
            <person name="Ferriera S."/>
            <person name="Fleischmann W."/>
            <person name="Fosler C."/>
            <person name="Gabrielian A.E."/>
            <person name="Garg N.S."/>
            <person name="Gelbart W.M."/>
            <person name="Glasser K."/>
            <person name="Glodek A."/>
            <person name="Gong F."/>
            <person name="Gorrell J.H."/>
            <person name="Gu Z."/>
            <person name="Guan P."/>
            <person name="Harris M."/>
            <person name="Harris N.L."/>
            <person name="Harvey D.A."/>
            <person name="Heiman T.J."/>
            <person name="Hernandez J.R."/>
            <person name="Houck J."/>
            <person name="Hostin D."/>
            <person name="Houston K.A."/>
            <person name="Howland T.J."/>
            <person name="Wei M.-H."/>
            <person name="Ibegwam C."/>
            <person name="Jalali M."/>
            <person name="Kalush F."/>
            <person name="Karpen G.H."/>
            <person name="Ke Z."/>
            <person name="Kennison J.A."/>
            <person name="Ketchum K.A."/>
            <person name="Kimmel B.E."/>
            <person name="Kodira C.D."/>
            <person name="Kraft C.L."/>
            <person name="Kravitz S."/>
            <person name="Kulp D."/>
            <person name="Lai Z."/>
            <person name="Lasko P."/>
            <person name="Lei Y."/>
            <person name="Levitsky A.A."/>
            <person name="Li J.H."/>
            <person name="Li Z."/>
            <person name="Liang Y."/>
            <person name="Lin X."/>
            <person name="Liu X."/>
            <person name="Mattei B."/>
            <person name="McIntosh T.C."/>
            <person name="McLeod M.P."/>
            <person name="McPherson D."/>
            <person name="Merkulov G."/>
            <person name="Milshina N.V."/>
            <person name="Mobarry C."/>
            <person name="Morris J."/>
            <person name="Moshrefi A."/>
            <person name="Mount S.M."/>
            <person name="Moy M."/>
            <person name="Murphy B."/>
            <person name="Murphy L."/>
            <person name="Muzny D.M."/>
            <person name="Nelson D.L."/>
            <person name="Nelson D.R."/>
            <person name="Nelson K.A."/>
            <person name="Nixon K."/>
            <person name="Nusskern D.R."/>
            <person name="Pacleb J.M."/>
            <person name="Palazzolo M."/>
            <person name="Pittman G.S."/>
            <person name="Pan S."/>
            <person name="Pollard J."/>
            <person name="Puri V."/>
            <person name="Reese M.G."/>
            <person name="Reinert K."/>
            <person name="Remington K."/>
            <person name="Saunders R.D.C."/>
            <person name="Scheeler F."/>
            <person name="Shen H."/>
            <person name="Shue B.C."/>
            <person name="Siden-Kiamos I."/>
            <person name="Simpson M."/>
            <person name="Skupski M.P."/>
            <person name="Smith T.J."/>
            <person name="Spier E."/>
            <person name="Spradling A.C."/>
            <person name="Stapleton M."/>
            <person name="Strong R."/>
            <person name="Sun E."/>
            <person name="Svirskas R."/>
            <person name="Tector C."/>
            <person name="Turner R."/>
            <person name="Venter E."/>
            <person name="Wang A.H."/>
            <person name="Wang X."/>
            <person name="Wang Z.-Y."/>
            <person name="Wassarman D.A."/>
            <person name="Weinstock G.M."/>
            <person name="Weissenbach J."/>
            <person name="Williams S.M."/>
            <person name="Woodage T."/>
            <person name="Worley K.C."/>
            <person name="Wu D."/>
            <person name="Yang S."/>
            <person name="Yao Q.A."/>
            <person name="Ye J."/>
            <person name="Yeh R.-F."/>
            <person name="Zaveri J.S."/>
            <person name="Zhan M."/>
            <person name="Zhang G."/>
            <person name="Zhao Q."/>
            <person name="Zheng L."/>
            <person name="Zheng X.H."/>
            <person name="Zhong F.N."/>
            <person name="Zhong W."/>
            <person name="Zhou X."/>
            <person name="Zhu S.C."/>
            <person name="Zhu X."/>
            <person name="Smith H.O."/>
            <person name="Gibbs R.A."/>
            <person name="Myers E.W."/>
            <person name="Rubin G.M."/>
            <person name="Venter J.C."/>
        </authorList>
    </citation>
    <scope>NUCLEOTIDE SEQUENCE [LARGE SCALE GENOMIC DNA]</scope>
    <source>
        <strain>Berkeley</strain>
    </source>
</reference>
<reference key="3">
    <citation type="journal article" date="2002" name="Genome Biol.">
        <title>Annotation of the Drosophila melanogaster euchromatic genome: a systematic review.</title>
        <authorList>
            <person name="Misra S."/>
            <person name="Crosby M.A."/>
            <person name="Mungall C.J."/>
            <person name="Matthews B.B."/>
            <person name="Campbell K.S."/>
            <person name="Hradecky P."/>
            <person name="Huang Y."/>
            <person name="Kaminker J.S."/>
            <person name="Millburn G.H."/>
            <person name="Prochnik S.E."/>
            <person name="Smith C.D."/>
            <person name="Tupy J.L."/>
            <person name="Whitfield E.J."/>
            <person name="Bayraktaroglu L."/>
            <person name="Berman B.P."/>
            <person name="Bettencourt B.R."/>
            <person name="Celniker S.E."/>
            <person name="de Grey A.D.N.J."/>
            <person name="Drysdale R.A."/>
            <person name="Harris N.L."/>
            <person name="Richter J."/>
            <person name="Russo S."/>
            <person name="Schroeder A.J."/>
            <person name="Shu S.Q."/>
            <person name="Stapleton M."/>
            <person name="Yamada C."/>
            <person name="Ashburner M."/>
            <person name="Gelbart W.M."/>
            <person name="Rubin G.M."/>
            <person name="Lewis S.E."/>
        </authorList>
    </citation>
    <scope>GENOME REANNOTATION</scope>
    <source>
        <strain>Berkeley</strain>
    </source>
</reference>
<sequence>MKLLVVAVIACIMLIGFADPASGCKDCSCVICGPGGEPCPGCSARVPVCKDLINIMEGLERQVRQCACGEQVWLF</sequence>
<comment type="developmental stage">
    <text>Produced by third-instar larvae.</text>
</comment>
<dbReference type="EMBL" id="X01918">
    <property type="protein sequence ID" value="CAA25992.1"/>
    <property type="molecule type" value="Genomic_DNA"/>
</dbReference>
<dbReference type="EMBL" id="AE014296">
    <property type="protein sequence ID" value="AAF50059.1"/>
    <property type="molecule type" value="Genomic_DNA"/>
</dbReference>
<dbReference type="PIR" id="A03331">
    <property type="entry name" value="GSFF8"/>
</dbReference>
<dbReference type="RefSeq" id="NP_476719.2">
    <property type="nucleotide sequence ID" value="NM_057371.3"/>
</dbReference>
<dbReference type="SMR" id="P02842"/>
<dbReference type="FunCoup" id="P02842">
    <property type="interactions" value="3"/>
</dbReference>
<dbReference type="STRING" id="7227.FBpp0075891"/>
<dbReference type="PaxDb" id="7227-FBpp0075891"/>
<dbReference type="DNASU" id="39285"/>
<dbReference type="EnsemblMetazoa" id="FBtr0076160">
    <property type="protein sequence ID" value="FBpp0075891"/>
    <property type="gene ID" value="FBgn0003378"/>
</dbReference>
<dbReference type="GeneID" id="39285"/>
<dbReference type="KEGG" id="dme:Dmel_CG6132"/>
<dbReference type="AGR" id="FB:FBgn0003378"/>
<dbReference type="CTD" id="39285"/>
<dbReference type="FlyBase" id="FBgn0003378">
    <property type="gene designation" value="Sgs8"/>
</dbReference>
<dbReference type="VEuPathDB" id="VectorBase:FBgn0003378"/>
<dbReference type="GeneTree" id="ENSGT00940000176463"/>
<dbReference type="HOGENOM" id="CLU_2690406_0_0_1"/>
<dbReference type="InParanoid" id="P02842"/>
<dbReference type="OMA" id="ERVPLCK"/>
<dbReference type="OrthoDB" id="7871374at2759"/>
<dbReference type="PhylomeDB" id="P02842"/>
<dbReference type="BioGRID-ORCS" id="39285">
    <property type="hits" value="0 hits in 1 CRISPR screen"/>
</dbReference>
<dbReference type="ChiTaRS" id="Sgs8">
    <property type="organism name" value="fly"/>
</dbReference>
<dbReference type="GenomeRNAi" id="39285"/>
<dbReference type="PRO" id="PR:P02842"/>
<dbReference type="Proteomes" id="UP000000803">
    <property type="component" value="Chromosome 3L"/>
</dbReference>
<dbReference type="Bgee" id="FBgn0003378">
    <property type="expression patterns" value="Expressed in saliva-secreting gland and 13 other cell types or tissues"/>
</dbReference>
<dbReference type="ExpressionAtlas" id="P02842">
    <property type="expression patterns" value="baseline and differential"/>
</dbReference>
<dbReference type="GO" id="GO:0005576">
    <property type="term" value="C:extracellular region"/>
    <property type="evidence" value="ECO:0000314"/>
    <property type="project" value="FlyBase"/>
</dbReference>
<dbReference type="GO" id="GO:0140073">
    <property type="term" value="F:bioadhesive activity"/>
    <property type="evidence" value="ECO:0000269"/>
    <property type="project" value="FlyBase"/>
</dbReference>
<dbReference type="GO" id="GO:0007594">
    <property type="term" value="P:puparial adhesion"/>
    <property type="evidence" value="ECO:0000270"/>
    <property type="project" value="FlyBase"/>
</dbReference>
<accession>P02842</accession>
<accession>Q9VTI9</accession>
<feature type="signal peptide">
    <location>
        <begin position="1"/>
        <end position="24"/>
    </location>
</feature>
<feature type="chain" id="PRO_0000022335" description="Salivary glue protein Sgs-8">
    <location>
        <begin position="25"/>
        <end position="75"/>
    </location>
</feature>